<name>RL14E_METVS</name>
<organism>
    <name type="scientific">Methanococcus vannielii (strain ATCC 35089 / DSM 1224 / JCM 13029 / OCM 148 / SB)</name>
    <dbReference type="NCBI Taxonomy" id="406327"/>
    <lineage>
        <taxon>Archaea</taxon>
        <taxon>Methanobacteriati</taxon>
        <taxon>Methanobacteriota</taxon>
        <taxon>Methanomada group</taxon>
        <taxon>Methanococci</taxon>
        <taxon>Methanococcales</taxon>
        <taxon>Methanococcaceae</taxon>
        <taxon>Methanococcus</taxon>
    </lineage>
</organism>
<keyword id="KW-0687">Ribonucleoprotein</keyword>
<keyword id="KW-0689">Ribosomal protein</keyword>
<protein>
    <recommendedName>
        <fullName evidence="1">Large ribosomal subunit protein eL14</fullName>
    </recommendedName>
    <alternativeName>
        <fullName evidence="2">50S ribosomal protein L14e</fullName>
    </alternativeName>
</protein>
<dbReference type="EMBL" id="CP000742">
    <property type="protein sequence ID" value="ABR55392.1"/>
    <property type="molecule type" value="Genomic_DNA"/>
</dbReference>
<dbReference type="RefSeq" id="WP_012066306.1">
    <property type="nucleotide sequence ID" value="NC_009634.1"/>
</dbReference>
<dbReference type="SMR" id="A6USC0"/>
<dbReference type="STRING" id="406327.Mevan_1498"/>
<dbReference type="GeneID" id="5325182"/>
<dbReference type="KEGG" id="mvn:Mevan_1498"/>
<dbReference type="eggNOG" id="arCOG04167">
    <property type="taxonomic scope" value="Archaea"/>
</dbReference>
<dbReference type="HOGENOM" id="CLU_183474_0_0_2"/>
<dbReference type="OrthoDB" id="63594at2157"/>
<dbReference type="Proteomes" id="UP000001107">
    <property type="component" value="Chromosome"/>
</dbReference>
<dbReference type="GO" id="GO:0022625">
    <property type="term" value="C:cytosolic large ribosomal subunit"/>
    <property type="evidence" value="ECO:0007669"/>
    <property type="project" value="TreeGrafter"/>
</dbReference>
<dbReference type="GO" id="GO:0003723">
    <property type="term" value="F:RNA binding"/>
    <property type="evidence" value="ECO:0007669"/>
    <property type="project" value="InterPro"/>
</dbReference>
<dbReference type="GO" id="GO:0003735">
    <property type="term" value="F:structural constituent of ribosome"/>
    <property type="evidence" value="ECO:0007669"/>
    <property type="project" value="InterPro"/>
</dbReference>
<dbReference type="GO" id="GO:0042273">
    <property type="term" value="P:ribosomal large subunit biogenesis"/>
    <property type="evidence" value="ECO:0007669"/>
    <property type="project" value="TreeGrafter"/>
</dbReference>
<dbReference type="GO" id="GO:0006412">
    <property type="term" value="P:translation"/>
    <property type="evidence" value="ECO:0007669"/>
    <property type="project" value="UniProtKB-UniRule"/>
</dbReference>
<dbReference type="CDD" id="cd06088">
    <property type="entry name" value="KOW_RPL14"/>
    <property type="match status" value="1"/>
</dbReference>
<dbReference type="Gene3D" id="2.30.30.30">
    <property type="match status" value="1"/>
</dbReference>
<dbReference type="HAMAP" id="MF_00721">
    <property type="entry name" value="Ribosomal_eL14"/>
    <property type="match status" value="1"/>
</dbReference>
<dbReference type="InterPro" id="IPR014722">
    <property type="entry name" value="Rib_uL2_dom2"/>
</dbReference>
<dbReference type="InterPro" id="IPR039660">
    <property type="entry name" value="Ribosomal_eL14"/>
</dbReference>
<dbReference type="InterPro" id="IPR023651">
    <property type="entry name" value="Ribosomal_eL14_arc"/>
</dbReference>
<dbReference type="InterPro" id="IPR041985">
    <property type="entry name" value="Ribosomal_eL14_KOW"/>
</dbReference>
<dbReference type="InterPro" id="IPR008991">
    <property type="entry name" value="Translation_prot_SH3-like_sf"/>
</dbReference>
<dbReference type="NCBIfam" id="NF003320">
    <property type="entry name" value="PRK04333.1"/>
    <property type="match status" value="1"/>
</dbReference>
<dbReference type="PANTHER" id="PTHR11127">
    <property type="entry name" value="60S RIBOSOMAL PROTEIN L14"/>
    <property type="match status" value="1"/>
</dbReference>
<dbReference type="PANTHER" id="PTHR11127:SF2">
    <property type="entry name" value="LARGE RIBOSOMAL SUBUNIT PROTEIN EL14"/>
    <property type="match status" value="1"/>
</dbReference>
<dbReference type="SUPFAM" id="SSF50104">
    <property type="entry name" value="Translation proteins SH3-like domain"/>
    <property type="match status" value="1"/>
</dbReference>
<evidence type="ECO:0000255" key="1">
    <source>
        <dbReference type="HAMAP-Rule" id="MF_00721"/>
    </source>
</evidence>
<evidence type="ECO:0000305" key="2"/>
<reference key="1">
    <citation type="submission" date="2007-06" db="EMBL/GenBank/DDBJ databases">
        <title>Complete sequence of Methanococcus vannielii SB.</title>
        <authorList>
            <consortium name="US DOE Joint Genome Institute"/>
            <person name="Copeland A."/>
            <person name="Lucas S."/>
            <person name="Lapidus A."/>
            <person name="Barry K."/>
            <person name="Glavina del Rio T."/>
            <person name="Dalin E."/>
            <person name="Tice H."/>
            <person name="Pitluck S."/>
            <person name="Chain P."/>
            <person name="Malfatti S."/>
            <person name="Shin M."/>
            <person name="Vergez L."/>
            <person name="Schmutz J."/>
            <person name="Larimer F."/>
            <person name="Land M."/>
            <person name="Hauser L."/>
            <person name="Kyrpides N."/>
            <person name="Anderson I."/>
            <person name="Sieprawska-Lupa M."/>
            <person name="Whitman W.B."/>
            <person name="Richardson P."/>
        </authorList>
    </citation>
    <scope>NUCLEOTIDE SEQUENCE [LARGE SCALE GENOMIC DNA]</scope>
    <source>
        <strain>ATCC 35089 / DSM 1224 / JCM 13029 / OCM 148 / SB</strain>
    </source>
</reference>
<sequence>MAAIEVGRVCIKTLGREAGNVCVIVEVLDKNYIVVDGNVKRRRCNVKHVEPTDKKVELEKGASTEEVKLSLDAAGLL</sequence>
<accession>A6USC0</accession>
<feature type="chain" id="PRO_1000045821" description="Large ribosomal subunit protein eL14">
    <location>
        <begin position="1"/>
        <end position="77"/>
    </location>
</feature>
<comment type="similarity">
    <text evidence="1">Belongs to the eukaryotic ribosomal protein eL14 family.</text>
</comment>
<gene>
    <name evidence="1" type="primary">rpl14e</name>
    <name type="ordered locus">Mevan_1498</name>
</gene>
<proteinExistence type="inferred from homology"/>